<organism evidence="13">
    <name type="scientific">Plasmodium berghei (strain Anka)</name>
    <dbReference type="NCBI Taxonomy" id="5823"/>
    <lineage>
        <taxon>Eukaryota</taxon>
        <taxon>Sar</taxon>
        <taxon>Alveolata</taxon>
        <taxon>Apicomplexa</taxon>
        <taxon>Aconoidasida</taxon>
        <taxon>Haemosporida</taxon>
        <taxon>Plasmodiidae</taxon>
        <taxon>Plasmodium</taxon>
        <taxon>Plasmodium (Vinckeia)</taxon>
    </lineage>
</organism>
<sequence length="2591" mass="306873">MYNKGINICLNEDNKCIILLHIIFNKCIVSFVASHILVEGKICFLNRIKNSKIFRRFGNINNHRRNNVKEYYKFVGRINKGKEKRNKCRIKLHRFYEYAKSYILKQIKWVLNKSKYIYFNIIYHLKTICYLKNAFFLQYTQRKYFSQNIENYIINSLPKHIQSFNPIKWSYYNNNEYASNYIIINNLNFIKYKNKYEKQYDIEMEEDINCKGANDIFYNSYNYCNNNNSNSKCDEKIEKNIVDKNIENKYNIKEYDKTNKSILFPIEEEFKKIIQIENNIERNYMVPNESNKNILYNIKNILEKIRNIEAISNINNYIDMKNTIESYKLNPDKCKEILHKDKDFRNKSKLCLSCFHNIIHKIIYYSKMENISFSDMYKQLLTNYNNTSCEYCNLINNSINSNNDFLSLYNDKNMYNWKNCEKNKFETLENEISCWNFNSSYGNHFQHIQKNSKIYRRILNEENEKAFNNIVGRNEMENDELYKRIHTENNYANQFTENNVDFGVYSDLREYNNGNEKYMLDENEMDQIIDEEVKKQEKNQNLNNMDFNNVNKKYNQLKDDNIIIFNKNNMHNNLYSNGLNDSNLEKNNILFPYEKYNNLDKNEMNLTKYSQNKQFYGQYKYDEAIYKYDLIVLDTSGYIYKVSTDGTYHWKYRIVKNIQYYINYEEENKIENYYNAFKKNNGKINMTHKDILRKNDYEQYHKLKLRAMKKLQYNNFIDVFNSNYKKNYPTYLNEQITEKDDIYKKKNYNYEKSKKKSKNKNAMKKLLSDYSGDLFYVDENNEAIPININIKDVVNNSPFKSTLFPNILFIGSRQSSIVNLDFDTGYVIKKYEENYDDLVKEKQKALPNKYEKFINKNSNVLHDKLEKYLDHSIDINDKNYYVNEEKDDLDKDYTIIDGKVAENNQQLDNIDLYNNEIETENNNGINHLLLIDGKGQIEEQSPNNGNKIIKGDVSNMTDECGTENCLSKHSKEEIEIANNKFNKNNKDKLLIQRTKIKNKKHFLMGKWYMNISNNNLLNINSSVLGINKKKRNSKKGENRNKKRKTQKRQLQISLVKWVIKAVDETSLKQKWITSWVDVGSIFITDSHKQDLSFINSLIDIDGNKLILRTLENNKVNKPYNNTISKNIEDAERNELEFASENYKNDIPNEIDEHNNKMGRNMNKLNSNIKSKIFIFSKEISSVFALQYKSKTNIFTLDTILKQNEKLFPEYDNIKPYSYNLLNLKNNSNALLLPFSSSNDYLKNNDKKNLPWNFNYDENGTNANNSIAFQNYNNFIVQRLNNISINITSIEKDLRYLLLSIIFVFDKHKKIPMNYIFQMKTLLHEYQKTKQKFMICLRGLNHNKNINIFSNHNDIRDTDIKHYGYNDYDYINKEMDAIDEPIHICEYTNKFIDLSFEGKEKCIDYCSMLNIWDKIFNNYTNHDDCLLLSNLYRILNSTYPLTNKDFNRIIDGIFLKNNESMLIKRRRKPNEGSRNHDLTEFSSQKHKKSWYWNIFYAITLVIVIPFIFIYRLFKKQTNNKNNNKIIMRKKKITDYDEDSNDTYDDELLNIDKVLLKRNKRKLANILKENGISSLNKTELEKYMKKSLKKAQDIEQLTLVDILARHARDSDSDSNFYDIHDGKYNLYPYYYSGQESKYSLPNMHYIDLSKSNSGETNKYDLNGNNLFYMHRRRAASQDVTYKQSFIVKKRVRSNYKLGNKYNKRNYTDYEKDKKNSSIKERNINEKAFDKSDFINFLKNFNKKFMKKNPFVDHLMKNNKTDSNNEFNNDNKEKSKYLYNEKYNLNSADEENKSPYAKKYSDEKKNRSKSSKYIENTQSNNNDNTNGNMNVGNHINNDKMNNKGSSARNLSIIQTSHIPYDAPLADFLENGRFTRTFQNISLIGQGGFGSVYKVSHRLEPGSPTYAVKFIYLKVSSLDNVNSRRYFREIAANRDIYSKHVVRYYTWWCEEPQFLPMDIIPKEIQNTLKKNKDPFKKVCNKNKKDNDYSSDCTVSSGENNKFDLKNYKKVITKKNSPKLKFYSDNDTPYNKRKNINQKNSFLNDKNLSDNIYIIENNKKKKKKKKKKKKIIYKEKKKGNIGINEDNKYSTFYEQNNPNNFSSTLQEYDPFGYGYLSENERDLIVFADNDESNGSGHSKKNDNDERKSLNNQNGIYNTGGDISKNGNVIHDDSNMLACQQSDKNSMTIKNTQGTSINGTINRNTISDETGTQGTNNNPKYSIDYHIDAIVKPKGESFTWVEKSPSNKYKKDSLDIINRNRKLIEEKNKKEKGQEKEKYKLKMNGELEKKENANKIKYYKKKNVGPEFSIVLLLQMEFCKGFTLRRWLDRSSRSDKPLYFTYGDKNTNHPLEFDLFKQLIKGLKDIHSTCFIHRDLKPENIFVDLDTYILKIGDLGLVRFIEEKKRENDLNNIDNFKDNIYTEINHNTITSQISLKGQMIGTPGYTAPEGGALCDEKADIYSAALILLELLCPRFNTIMERYKTLNDFRNYYTVPDYVKIHLNPWYILMLQMSKPNPADRPSAADLYNKIKVLLDPHLTDFTFSFNDINNDDLEYTGNRNVINSTNPNGDIKENVNQNNLVDDKGNNNIINGNEVDH</sequence>
<proteinExistence type="evidence at protein level"/>
<feature type="chain" id="PRO_0000456976" description="Eukaryotic translation initiation factor 2-alpha kinase PK4">
    <location>
        <begin position="1"/>
        <end position="2591"/>
    </location>
</feature>
<feature type="topological domain" description="Cytoplasmic" evidence="10">
    <location>
        <begin position="1"/>
        <end position="16"/>
    </location>
</feature>
<feature type="transmembrane region" description="Helical" evidence="2">
    <location>
        <begin position="17"/>
        <end position="37"/>
    </location>
</feature>
<feature type="topological domain" description="Lumenal" evidence="10">
    <location>
        <begin position="38"/>
        <end position="1488"/>
    </location>
</feature>
<feature type="transmembrane region" description="Helical" evidence="2">
    <location>
        <begin position="1489"/>
        <end position="1509"/>
    </location>
</feature>
<feature type="topological domain" description="Cytoplasmic" evidence="10">
    <location>
        <begin position="1510"/>
        <end position="2591"/>
    </location>
</feature>
<feature type="domain" description="Protein kinase" evidence="3">
    <location>
        <begin position="2181"/>
        <end position="2532"/>
    </location>
</feature>
<feature type="region of interest" description="Disordered" evidence="5">
    <location>
        <begin position="1028"/>
        <end position="1048"/>
    </location>
</feature>
<feature type="region of interest" description="Disordered" evidence="5">
    <location>
        <begin position="1781"/>
        <end position="1840"/>
    </location>
</feature>
<feature type="region of interest" description="Disordered" evidence="5">
    <location>
        <begin position="2123"/>
        <end position="2157"/>
    </location>
</feature>
<feature type="region of interest" description="Disordered" evidence="5">
    <location>
        <begin position="2183"/>
        <end position="2212"/>
    </location>
</feature>
<feature type="region of interest" description="Disordered" evidence="5">
    <location>
        <begin position="2558"/>
        <end position="2591"/>
    </location>
</feature>
<feature type="compositionally biased region" description="Low complexity" evidence="5">
    <location>
        <begin position="1813"/>
        <end position="1832"/>
    </location>
</feature>
<feature type="compositionally biased region" description="Basic and acidic residues" evidence="5">
    <location>
        <begin position="2134"/>
        <end position="2143"/>
    </location>
</feature>
<feature type="compositionally biased region" description="Polar residues" evidence="5">
    <location>
        <begin position="2558"/>
        <end position="2574"/>
    </location>
</feature>
<feature type="compositionally biased region" description="Low complexity" evidence="5">
    <location>
        <begin position="2580"/>
        <end position="2591"/>
    </location>
</feature>
<feature type="active site" description="Proton acceptor" evidence="4">
    <location>
        <position position="2369"/>
    </location>
</feature>
<feature type="binding site" evidence="10">
    <location>
        <begin position="1880"/>
        <end position="1888"/>
    </location>
    <ligand>
        <name>ATP</name>
        <dbReference type="ChEBI" id="CHEBI:30616"/>
    </ligand>
</feature>
<feature type="binding site" evidence="10">
    <location>
        <position position="1905"/>
    </location>
    <ligand>
        <name>ATP</name>
        <dbReference type="ChEBI" id="CHEBI:30616"/>
    </ligand>
</feature>
<feature type="modified residue" description="Phosphothreonine; by autocatalysis" evidence="11">
    <location>
        <position position="2436"/>
    </location>
</feature>
<feature type="mutagenesis site" description="Loss of autophosphorylation and loss of catalytic activity." evidence="8">
    <original>T</original>
    <variation>A</variation>
    <location>
        <position position="2436"/>
    </location>
</feature>
<accession>A0A509AMC3</accession>
<evidence type="ECO:0000250" key="1">
    <source>
        <dbReference type="UniProtKB" id="C6KTB8"/>
    </source>
</evidence>
<evidence type="ECO:0000255" key="2"/>
<evidence type="ECO:0000255" key="3">
    <source>
        <dbReference type="PROSITE-ProRule" id="PRU00159"/>
    </source>
</evidence>
<evidence type="ECO:0000255" key="4">
    <source>
        <dbReference type="PROSITE-ProRule" id="PRU10027"/>
    </source>
</evidence>
<evidence type="ECO:0000256" key="5">
    <source>
        <dbReference type="SAM" id="MobiDB-lite"/>
    </source>
</evidence>
<evidence type="ECO:0000269" key="6">
    <source>
    </source>
</evidence>
<evidence type="ECO:0000269" key="7">
    <source>
    </source>
</evidence>
<evidence type="ECO:0000269" key="8">
    <source>
    </source>
</evidence>
<evidence type="ECO:0000303" key="9">
    <source>
    </source>
</evidence>
<evidence type="ECO:0000305" key="10"/>
<evidence type="ECO:0000305" key="11">
    <source>
    </source>
</evidence>
<evidence type="ECO:0000312" key="12">
    <source>
        <dbReference type="EMBL" id="VUC56690.1"/>
    </source>
</evidence>
<evidence type="ECO:0000312" key="13">
    <source>
        <dbReference type="Proteomes" id="UP000074855"/>
    </source>
</evidence>
<dbReference type="EC" id="2.7.11.1" evidence="8"/>
<dbReference type="EMBL" id="LK023126">
    <property type="protein sequence ID" value="VUC56690.1"/>
    <property type="molecule type" value="Genomic_DNA"/>
</dbReference>
<dbReference type="FunCoup" id="A0A509AMC3">
    <property type="interactions" value="4"/>
</dbReference>
<dbReference type="STRING" id="5823.A0A509AMC3"/>
<dbReference type="iPTMnet" id="A0A509AMC3"/>
<dbReference type="VEuPathDB" id="PlasmoDB:PBANKA_1126900"/>
<dbReference type="InParanoid" id="A0A509AMC3"/>
<dbReference type="OMA" id="NTIMERY"/>
<dbReference type="Proteomes" id="UP000074855">
    <property type="component" value="Chromosome 11"/>
</dbReference>
<dbReference type="GO" id="GO:0005789">
    <property type="term" value="C:endoplasmic reticulum membrane"/>
    <property type="evidence" value="ECO:0000315"/>
    <property type="project" value="UniProtKB"/>
</dbReference>
<dbReference type="GO" id="GO:0005634">
    <property type="term" value="C:nucleus"/>
    <property type="evidence" value="ECO:0007669"/>
    <property type="project" value="TreeGrafter"/>
</dbReference>
<dbReference type="GO" id="GO:0005524">
    <property type="term" value="F:ATP binding"/>
    <property type="evidence" value="ECO:0007669"/>
    <property type="project" value="UniProtKB-KW"/>
</dbReference>
<dbReference type="GO" id="GO:0004694">
    <property type="term" value="F:eukaryotic translation initiation factor 2alpha kinase activity"/>
    <property type="evidence" value="ECO:0007669"/>
    <property type="project" value="TreeGrafter"/>
</dbReference>
<dbReference type="GO" id="GO:0017148">
    <property type="term" value="P:negative regulation of translation"/>
    <property type="evidence" value="ECO:0007669"/>
    <property type="project" value="UniProtKB-KW"/>
</dbReference>
<dbReference type="GO" id="GO:0018105">
    <property type="term" value="P:peptidyl-serine phosphorylation"/>
    <property type="evidence" value="ECO:0000314"/>
    <property type="project" value="UniProtKB"/>
</dbReference>
<dbReference type="GO" id="GO:0018107">
    <property type="term" value="P:peptidyl-threonine phosphorylation"/>
    <property type="evidence" value="ECO:0000315"/>
    <property type="project" value="UniProtKB"/>
</dbReference>
<dbReference type="GO" id="GO:0010998">
    <property type="term" value="P:regulation of translational initiation by eIF2 alpha phosphorylation"/>
    <property type="evidence" value="ECO:0000314"/>
    <property type="project" value="UniProtKB"/>
</dbReference>
<dbReference type="FunFam" id="3.30.200.20:FF:000516">
    <property type="entry name" value="Protein kinase PK4, putative"/>
    <property type="match status" value="1"/>
</dbReference>
<dbReference type="Gene3D" id="3.30.200.20">
    <property type="entry name" value="Phosphorylase Kinase, domain 1"/>
    <property type="match status" value="1"/>
</dbReference>
<dbReference type="Gene3D" id="1.10.510.10">
    <property type="entry name" value="Transferase(Phosphotransferase) domain 1"/>
    <property type="match status" value="1"/>
</dbReference>
<dbReference type="InterPro" id="IPR050339">
    <property type="entry name" value="CC_SR_Kinase"/>
</dbReference>
<dbReference type="InterPro" id="IPR011009">
    <property type="entry name" value="Kinase-like_dom_sf"/>
</dbReference>
<dbReference type="InterPro" id="IPR000719">
    <property type="entry name" value="Prot_kinase_dom"/>
</dbReference>
<dbReference type="InterPro" id="IPR008271">
    <property type="entry name" value="Ser/Thr_kinase_AS"/>
</dbReference>
<dbReference type="PANTHER" id="PTHR11042:SF160">
    <property type="entry name" value="EUKARYOTIC TRANSLATION INITIATION FACTOR 2-ALPHA KINASE 1"/>
    <property type="match status" value="1"/>
</dbReference>
<dbReference type="PANTHER" id="PTHR11042">
    <property type="entry name" value="EUKARYOTIC TRANSLATION INITIATION FACTOR 2-ALPHA KINASE EIF2-ALPHA KINASE -RELATED"/>
    <property type="match status" value="1"/>
</dbReference>
<dbReference type="Pfam" id="PF00069">
    <property type="entry name" value="Pkinase"/>
    <property type="match status" value="1"/>
</dbReference>
<dbReference type="SMART" id="SM00220">
    <property type="entry name" value="S_TKc"/>
    <property type="match status" value="1"/>
</dbReference>
<dbReference type="SUPFAM" id="SSF56112">
    <property type="entry name" value="Protein kinase-like (PK-like)"/>
    <property type="match status" value="1"/>
</dbReference>
<dbReference type="PROSITE" id="PS00107">
    <property type="entry name" value="PROTEIN_KINASE_ATP"/>
    <property type="match status" value="1"/>
</dbReference>
<dbReference type="PROSITE" id="PS50011">
    <property type="entry name" value="PROTEIN_KINASE_DOM"/>
    <property type="match status" value="1"/>
</dbReference>
<dbReference type="PROSITE" id="PS00108">
    <property type="entry name" value="PROTEIN_KINASE_ST"/>
    <property type="match status" value="1"/>
</dbReference>
<keyword id="KW-0067">ATP-binding</keyword>
<keyword id="KW-0256">Endoplasmic reticulum</keyword>
<keyword id="KW-0418">Kinase</keyword>
<keyword id="KW-0472">Membrane</keyword>
<keyword id="KW-0547">Nucleotide-binding</keyword>
<keyword id="KW-0597">Phosphoprotein</keyword>
<keyword id="KW-0652">Protein synthesis inhibitor</keyword>
<keyword id="KW-1185">Reference proteome</keyword>
<keyword id="KW-0723">Serine/threonine-protein kinase</keyword>
<keyword id="KW-0808">Transferase</keyword>
<keyword id="KW-0812">Transmembrane</keyword>
<keyword id="KW-1133">Transmembrane helix</keyword>
<reference evidence="13" key="1">
    <citation type="journal article" date="2014" name="BMC Biol.">
        <title>A comprehensive evaluation of rodent malaria parasite genomes and gene expression.</title>
        <authorList>
            <person name="Otto T.D."/>
            <person name="Bohme U."/>
            <person name="Jackson A.P."/>
            <person name="Hunt M."/>
            <person name="Franke-Fayard B."/>
            <person name="Hoeijmakers W.A."/>
            <person name="Religa A.A."/>
            <person name="Robertson L."/>
            <person name="Sanders M."/>
            <person name="Ogun S.A."/>
            <person name="Cunningham D."/>
            <person name="Erhart A."/>
            <person name="Billker O."/>
            <person name="Khan S.M."/>
            <person name="Stunnenberg H.G."/>
            <person name="Langhorne J."/>
            <person name="Holder A.A."/>
            <person name="Waters A.P."/>
            <person name="Newbold C.I."/>
            <person name="Pain A."/>
            <person name="Berriman M."/>
            <person name="Janse C.J."/>
        </authorList>
    </citation>
    <scope>NUCLEOTIDE SEQUENCE [LARGE SCALE GENOMIC DNA]</scope>
    <source>
        <strain evidence="13">ANKA</strain>
    </source>
</reference>
<reference evidence="10" key="2">
    <citation type="journal article" date="2010" name="J. Exp. Med.">
        <title>The Plasmodium eukaryotic initiation factor-2alpha kinase IK2 controls the latency of sporozoites in the mosquito salivary glands.</title>
        <authorList>
            <person name="Zhang M."/>
            <person name="Fennell C."/>
            <person name="Ranford-Cartwright L."/>
            <person name="Sakthivel R."/>
            <person name="Gueirard P."/>
            <person name="Meister S."/>
            <person name="Caspi A."/>
            <person name="Doerig C."/>
            <person name="Nussenzweig R.S."/>
            <person name="Tuteja R."/>
            <person name="Sullivan W.J. Jr."/>
            <person name="Roos D.S."/>
            <person name="Fontoura B.M."/>
            <person name="Menard R."/>
            <person name="Winzeler E.A."/>
            <person name="Nussenzweig V."/>
        </authorList>
    </citation>
    <scope>DEVELOPMENTAL STAGE</scope>
</reference>
<reference evidence="10" key="3">
    <citation type="journal article" date="2012" name="Proc. Natl. Acad. Sci. U.S.A.">
        <title>PK4, a eukaryotic initiation factor 2alpha(eIF2alpha) kinase, is essential for the development of the erythrocytic cycle of Plasmodium.</title>
        <authorList>
            <person name="Zhang M."/>
            <person name="Mishra S."/>
            <person name="Sakthivel R."/>
            <person name="Rojas M."/>
            <person name="Ranjan R."/>
            <person name="Sullivan W.J. Jr."/>
            <person name="Fontoura B.M."/>
            <person name="Menard R."/>
            <person name="Dever T.E."/>
            <person name="Nussenzweig V."/>
        </authorList>
    </citation>
    <scope>DISRUPTION PHENOTYPE</scope>
</reference>
<reference evidence="10" key="4">
    <citation type="journal article" date="2017" name="Cell Host Microbe">
        <title>Inhibiting the Plasmodium eIF2alpha Kinase PK4 Prevents Artemisinin-Induced Latency.</title>
        <authorList>
            <person name="Zhang M."/>
            <person name="Gallego-Delgado J."/>
            <person name="Fernandez-Arias C."/>
            <person name="Waters N.C."/>
            <person name="Rodriguez A."/>
            <person name="Tsuji M."/>
            <person name="Wek R.C."/>
            <person name="Nussenzweig V."/>
            <person name="Sullivan W.J. Jr."/>
        </authorList>
    </citation>
    <scope>FUNCTION</scope>
    <scope>CATALYTIC ACTIVITY</scope>
    <scope>ACTIVITY REGULATION</scope>
    <scope>INTERACTION WITH BIP</scope>
    <scope>SUBCELLULAR LOCATION</scope>
    <scope>DEVELOPMENTAL STAGE</scope>
    <scope>PHOSPHORYLATION AT THR-2436</scope>
    <scope>MUTAGENESIS OF THR-2436</scope>
</reference>
<protein>
    <recommendedName>
        <fullName evidence="9">Eukaryotic translation initiation factor 2-alpha kinase PK4</fullName>
        <shortName evidence="9">eIF2alpha kinase PK4</shortName>
        <ecNumber evidence="8">2.7.11.1</ecNumber>
    </recommendedName>
    <alternativeName>
        <fullName evidence="9">Protein kinase PK4</fullName>
        <shortName evidence="9">PbPK4</shortName>
    </alternativeName>
</protein>
<gene>
    <name evidence="9" type="primary">PK4</name>
    <name evidence="12" type="ORF">PBANKA_1126900</name>
</gene>
<comment type="function">
    <text evidence="8">During the asexual blood stage, phosphorylates translation factor eIF2alpha in late schizonts resulting in protein translation inhibition (PubMed:29241041). Plays a role in trophozoite differentiation into schizonts (PubMed:29241041).</text>
</comment>
<comment type="catalytic activity">
    <reaction evidence="8">
        <text>L-seryl-[protein] + ATP = O-phospho-L-seryl-[protein] + ADP + H(+)</text>
        <dbReference type="Rhea" id="RHEA:17989"/>
        <dbReference type="Rhea" id="RHEA-COMP:9863"/>
        <dbReference type="Rhea" id="RHEA-COMP:11604"/>
        <dbReference type="ChEBI" id="CHEBI:15378"/>
        <dbReference type="ChEBI" id="CHEBI:29999"/>
        <dbReference type="ChEBI" id="CHEBI:30616"/>
        <dbReference type="ChEBI" id="CHEBI:83421"/>
        <dbReference type="ChEBI" id="CHEBI:456216"/>
        <dbReference type="EC" id="2.7.11.1"/>
    </reaction>
    <physiologicalReaction direction="left-to-right" evidence="8">
        <dbReference type="Rhea" id="RHEA:17990"/>
    </physiologicalReaction>
</comment>
<comment type="catalytic activity">
    <reaction evidence="8">
        <text>L-threonyl-[protein] + ATP = O-phospho-L-threonyl-[protein] + ADP + H(+)</text>
        <dbReference type="Rhea" id="RHEA:46608"/>
        <dbReference type="Rhea" id="RHEA-COMP:11060"/>
        <dbReference type="Rhea" id="RHEA-COMP:11605"/>
        <dbReference type="ChEBI" id="CHEBI:15378"/>
        <dbReference type="ChEBI" id="CHEBI:30013"/>
        <dbReference type="ChEBI" id="CHEBI:30616"/>
        <dbReference type="ChEBI" id="CHEBI:61977"/>
        <dbReference type="ChEBI" id="CHEBI:456216"/>
        <dbReference type="EC" id="2.7.11.1"/>
    </reaction>
    <physiologicalReaction direction="left-to-right" evidence="8">
        <dbReference type="Rhea" id="RHEA:46609"/>
    </physiologicalReaction>
</comment>
<comment type="activity regulation">
    <text evidence="11">Dissociation from BIP and oligomerization, may results autophosphorylation and kinase activity induction.</text>
</comment>
<comment type="subunit">
    <text evidence="1 8">May form oligomers in response to stress; oligomerization may result in catalytic activity (By similarity). Interacts with BIP; the interaction is disrupted in response to stress (PubMed:29241041).</text>
</comment>
<comment type="subcellular location">
    <subcellularLocation>
        <location evidence="8">Endoplasmic reticulum membrane</location>
        <topology evidence="2">Multi-pass membrane protein</topology>
    </subcellularLocation>
</comment>
<comment type="developmental stage">
    <text evidence="6 8">Expressed during the asexual blood stage including rings, trophozoites and schizonts (at protein level) (PubMed:20584882, PubMed:29241041). Expressed in gametocytes (PubMed:20584882).</text>
</comment>
<comment type="disruption phenotype">
    <text evidence="7">Ability of knockout sporozoites to infect mice is severely reduced (PubMed:22355110). However, does not affect sporozoite infection of and development in host hepatocytes, per se (PubMed:22355110).</text>
</comment>
<comment type="similarity">
    <text evidence="10">Belongs to the protein kinase superfamily. Ser/Thr protein kinase family. GCN2 subfamily.</text>
</comment>
<name>PK4_PLABA</name>